<dbReference type="EC" id="3.1.3.82" evidence="3"/>
<dbReference type="EMBL" id="AE003852">
    <property type="protein sequence ID" value="AAF94070.1"/>
    <property type="molecule type" value="Genomic_DNA"/>
</dbReference>
<dbReference type="PIR" id="D82266">
    <property type="entry name" value="D82266"/>
</dbReference>
<dbReference type="RefSeq" id="NP_230555.1">
    <property type="nucleotide sequence ID" value="NC_002505.1"/>
</dbReference>
<dbReference type="RefSeq" id="WP_001108094.1">
    <property type="nucleotide sequence ID" value="NZ_LT906614.1"/>
</dbReference>
<dbReference type="SMR" id="Q9KTJ4"/>
<dbReference type="STRING" id="243277.VC_0908"/>
<dbReference type="DNASU" id="2614199"/>
<dbReference type="EnsemblBacteria" id="AAF94070">
    <property type="protein sequence ID" value="AAF94070"/>
    <property type="gene ID" value="VC_0908"/>
</dbReference>
<dbReference type="GeneID" id="69720385"/>
<dbReference type="KEGG" id="vch:VC_0908"/>
<dbReference type="PATRIC" id="fig|243277.26.peg.865"/>
<dbReference type="eggNOG" id="COG0241">
    <property type="taxonomic scope" value="Bacteria"/>
</dbReference>
<dbReference type="HOGENOM" id="CLU_085077_3_0_6"/>
<dbReference type="BRENDA" id="3.1.3.82">
    <property type="organism ID" value="6626"/>
</dbReference>
<dbReference type="UniPathway" id="UPA00356">
    <property type="reaction ID" value="UER00438"/>
</dbReference>
<dbReference type="UniPathway" id="UPA00958"/>
<dbReference type="Proteomes" id="UP000000584">
    <property type="component" value="Chromosome 1"/>
</dbReference>
<dbReference type="GO" id="GO:0005737">
    <property type="term" value="C:cytoplasm"/>
    <property type="evidence" value="ECO:0007669"/>
    <property type="project" value="UniProtKB-SubCell"/>
</dbReference>
<dbReference type="GO" id="GO:0034200">
    <property type="term" value="F:D-glycero-beta-D-manno-heptose 1,7-bisphosphate 7-phosphatase activity"/>
    <property type="evidence" value="ECO:0000250"/>
    <property type="project" value="UniProtKB"/>
</dbReference>
<dbReference type="GO" id="GO:0000287">
    <property type="term" value="F:magnesium ion binding"/>
    <property type="evidence" value="ECO:0000250"/>
    <property type="project" value="UniProtKB"/>
</dbReference>
<dbReference type="GO" id="GO:0008270">
    <property type="term" value="F:zinc ion binding"/>
    <property type="evidence" value="ECO:0000250"/>
    <property type="project" value="UniProtKB"/>
</dbReference>
<dbReference type="GO" id="GO:0097171">
    <property type="term" value="P:ADP-L-glycero-beta-D-manno-heptose biosynthetic process"/>
    <property type="evidence" value="ECO:0007669"/>
    <property type="project" value="UniProtKB-UniPathway"/>
</dbReference>
<dbReference type="GO" id="GO:0009244">
    <property type="term" value="P:lipopolysaccharide core region biosynthetic process"/>
    <property type="evidence" value="ECO:0007669"/>
    <property type="project" value="UniProtKB-UniPathway"/>
</dbReference>
<dbReference type="CDD" id="cd07503">
    <property type="entry name" value="HAD_HisB-N"/>
    <property type="match status" value="1"/>
</dbReference>
<dbReference type="FunFam" id="3.40.50.1000:FF:000037">
    <property type="entry name" value="D,D-heptose 1,7-bisphosphate phosphatase"/>
    <property type="match status" value="1"/>
</dbReference>
<dbReference type="Gene3D" id="3.40.50.1000">
    <property type="entry name" value="HAD superfamily/HAD-like"/>
    <property type="match status" value="1"/>
</dbReference>
<dbReference type="InterPro" id="IPR036412">
    <property type="entry name" value="HAD-like_sf"/>
</dbReference>
<dbReference type="InterPro" id="IPR006549">
    <property type="entry name" value="HAD-SF_hydro_IIIA"/>
</dbReference>
<dbReference type="InterPro" id="IPR023214">
    <property type="entry name" value="HAD_sf"/>
</dbReference>
<dbReference type="InterPro" id="IPR004446">
    <property type="entry name" value="Heptose_bisP_phosphatase"/>
</dbReference>
<dbReference type="InterPro" id="IPR006543">
    <property type="entry name" value="Histidinol-phos"/>
</dbReference>
<dbReference type="NCBIfam" id="TIGR00213">
    <property type="entry name" value="GmhB_yaeD"/>
    <property type="match status" value="1"/>
</dbReference>
<dbReference type="NCBIfam" id="TIGR01662">
    <property type="entry name" value="HAD-SF-IIIA"/>
    <property type="match status" value="1"/>
</dbReference>
<dbReference type="NCBIfam" id="TIGR01656">
    <property type="entry name" value="Histidinol-ppas"/>
    <property type="match status" value="1"/>
</dbReference>
<dbReference type="NCBIfam" id="NF006506">
    <property type="entry name" value="PRK08942.1"/>
    <property type="match status" value="1"/>
</dbReference>
<dbReference type="PANTHER" id="PTHR42891">
    <property type="entry name" value="D-GLYCERO-BETA-D-MANNO-HEPTOSE-1,7-BISPHOSPHATE 7-PHOSPHATASE"/>
    <property type="match status" value="1"/>
</dbReference>
<dbReference type="PANTHER" id="PTHR42891:SF1">
    <property type="entry name" value="D-GLYCERO-BETA-D-MANNO-HEPTOSE-1,7-BISPHOSPHATE 7-PHOSPHATASE"/>
    <property type="match status" value="1"/>
</dbReference>
<dbReference type="Pfam" id="PF13242">
    <property type="entry name" value="Hydrolase_like"/>
    <property type="match status" value="1"/>
</dbReference>
<dbReference type="PIRSF" id="PIRSF004682">
    <property type="entry name" value="GmhB"/>
    <property type="match status" value="1"/>
</dbReference>
<dbReference type="SUPFAM" id="SSF56784">
    <property type="entry name" value="HAD-like"/>
    <property type="match status" value="1"/>
</dbReference>
<keyword id="KW-0119">Carbohydrate metabolism</keyword>
<keyword id="KW-0963">Cytoplasm</keyword>
<keyword id="KW-0378">Hydrolase</keyword>
<keyword id="KW-0448">Lipopolysaccharide biosynthesis</keyword>
<keyword id="KW-0460">Magnesium</keyword>
<keyword id="KW-0479">Metal-binding</keyword>
<keyword id="KW-1185">Reference proteome</keyword>
<keyword id="KW-0862">Zinc</keyword>
<gene>
    <name type="primary">gmhB</name>
    <name type="ordered locus">VC_0908</name>
</gene>
<feature type="chain" id="PRO_0000209408" description="D-glycero-beta-D-manno-heptose-1,7-bisphosphate 7-phosphatase">
    <location>
        <begin position="1"/>
        <end position="186"/>
    </location>
</feature>
<feature type="active site" description="Nucleophile" evidence="1">
    <location>
        <position position="9"/>
    </location>
</feature>
<feature type="active site" description="Proton donor" evidence="1">
    <location>
        <position position="11"/>
    </location>
</feature>
<feature type="binding site" evidence="1">
    <location>
        <begin position="9"/>
        <end position="11"/>
    </location>
    <ligand>
        <name>substrate</name>
    </ligand>
</feature>
<feature type="binding site" evidence="1">
    <location>
        <position position="9"/>
    </location>
    <ligand>
        <name>Mg(2+)</name>
        <dbReference type="ChEBI" id="CHEBI:18420"/>
    </ligand>
</feature>
<feature type="binding site" evidence="1">
    <location>
        <position position="11"/>
    </location>
    <ligand>
        <name>Mg(2+)</name>
        <dbReference type="ChEBI" id="CHEBI:18420"/>
    </ligand>
</feature>
<feature type="binding site" evidence="1">
    <location>
        <begin position="17"/>
        <end position="20"/>
    </location>
    <ligand>
        <name>substrate</name>
    </ligand>
</feature>
<feature type="binding site" evidence="1">
    <location>
        <begin position="51"/>
        <end position="54"/>
    </location>
    <ligand>
        <name>substrate</name>
    </ligand>
</feature>
<feature type="binding site" evidence="2">
    <location>
        <position position="90"/>
    </location>
    <ligand>
        <name>Zn(2+)</name>
        <dbReference type="ChEBI" id="CHEBI:29105"/>
    </ligand>
</feature>
<feature type="binding site" evidence="2">
    <location>
        <position position="92"/>
    </location>
    <ligand>
        <name>Zn(2+)</name>
        <dbReference type="ChEBI" id="CHEBI:29105"/>
    </ligand>
</feature>
<feature type="binding site" evidence="2">
    <location>
        <position position="105"/>
    </location>
    <ligand>
        <name>Zn(2+)</name>
        <dbReference type="ChEBI" id="CHEBI:29105"/>
    </ligand>
</feature>
<feature type="binding site" evidence="2">
    <location>
        <position position="107"/>
    </location>
    <ligand>
        <name>Zn(2+)</name>
        <dbReference type="ChEBI" id="CHEBI:29105"/>
    </ligand>
</feature>
<feature type="binding site" evidence="1">
    <location>
        <begin position="108"/>
        <end position="109"/>
    </location>
    <ligand>
        <name>substrate</name>
    </ligand>
</feature>
<feature type="binding site" evidence="1">
    <location>
        <position position="134"/>
    </location>
    <ligand>
        <name>Mg(2+)</name>
        <dbReference type="ChEBI" id="CHEBI:18420"/>
    </ligand>
</feature>
<feature type="binding site" evidence="1">
    <location>
        <position position="135"/>
    </location>
    <ligand>
        <name>Mg(2+)</name>
        <dbReference type="ChEBI" id="CHEBI:18420"/>
    </ligand>
</feature>
<feature type="binding site" evidence="1">
    <location>
        <position position="135"/>
    </location>
    <ligand>
        <name>substrate</name>
    </ligand>
</feature>
<feature type="site" description="Stabilizes the phosphoryl group" evidence="1">
    <location>
        <position position="51"/>
    </location>
</feature>
<feature type="site" description="Contributes to substrate recognition" evidence="1">
    <location>
        <position position="108"/>
    </location>
</feature>
<feature type="site" description="Stabilizes the phosphoryl group" evidence="1">
    <location>
        <position position="109"/>
    </location>
</feature>
<reference key="1">
    <citation type="journal article" date="2000" name="Nature">
        <title>DNA sequence of both chromosomes of the cholera pathogen Vibrio cholerae.</title>
        <authorList>
            <person name="Heidelberg J.F."/>
            <person name="Eisen J.A."/>
            <person name="Nelson W.C."/>
            <person name="Clayton R.A."/>
            <person name="Gwinn M.L."/>
            <person name="Dodson R.J."/>
            <person name="Haft D.H."/>
            <person name="Hickey E.K."/>
            <person name="Peterson J.D."/>
            <person name="Umayam L.A."/>
            <person name="Gill S.R."/>
            <person name="Nelson K.E."/>
            <person name="Read T.D."/>
            <person name="Tettelin H."/>
            <person name="Richardson D.L."/>
            <person name="Ermolaeva M.D."/>
            <person name="Vamathevan J.J."/>
            <person name="Bass S."/>
            <person name="Qin H."/>
            <person name="Dragoi I."/>
            <person name="Sellers P."/>
            <person name="McDonald L.A."/>
            <person name="Utterback T.R."/>
            <person name="Fleischmann R.D."/>
            <person name="Nierman W.C."/>
            <person name="White O."/>
            <person name="Salzberg S.L."/>
            <person name="Smith H.O."/>
            <person name="Colwell R.R."/>
            <person name="Mekalanos J.J."/>
            <person name="Venter J.C."/>
            <person name="Fraser C.M."/>
        </authorList>
    </citation>
    <scope>NUCLEOTIDE SEQUENCE [LARGE SCALE GENOMIC DNA]</scope>
    <source>
        <strain>ATCC 39315 / El Tor Inaba N16961</strain>
    </source>
</reference>
<reference key="2">
    <citation type="journal article" date="2002" name="Microbiology">
        <title>Novel pathways for biosynthesis of nucleotide-activated glycero-manno-heptose precursors of bacterial glycoproteins and cell surface polysaccharides.</title>
        <authorList>
            <person name="Valvano M.A."/>
            <person name="Messner P."/>
            <person name="Kosma P."/>
        </authorList>
    </citation>
    <scope>BIOSYNTHESIS OF NUCLEOTIDE-ACTIVATED GLYCERO-MANNO-HEPTOSE</scope>
</reference>
<reference key="3">
    <citation type="journal article" date="2015" name="Proc. Natl. Acad. Sci. U.S.A.">
        <title>Panoramic view of a superfamily of phosphatases through substrate profiling.</title>
        <authorList>
            <person name="Huang H."/>
            <person name="Pandya C."/>
            <person name="Liu C."/>
            <person name="Al-Obaidi N.F."/>
            <person name="Wang M."/>
            <person name="Zheng L."/>
            <person name="Toews Keating S."/>
            <person name="Aono M."/>
            <person name="Love J.D."/>
            <person name="Evans B."/>
            <person name="Seidel R.D."/>
            <person name="Hillerich B.S."/>
            <person name="Garforth S.J."/>
            <person name="Almo S.C."/>
            <person name="Mariano P.S."/>
            <person name="Dunaway-Mariano D."/>
            <person name="Allen K.N."/>
            <person name="Farelli J.D."/>
        </authorList>
    </citation>
    <scope>FUNCTION</scope>
    <scope>CATALYTIC ACTIVITY</scope>
    <scope>COFACTOR</scope>
</reference>
<evidence type="ECO:0000250" key="1"/>
<evidence type="ECO:0000250" key="2">
    <source>
        <dbReference type="UniProtKB" id="Q7WG29"/>
    </source>
</evidence>
<evidence type="ECO:0000269" key="3">
    <source>
    </source>
</evidence>
<evidence type="ECO:0000305" key="4"/>
<sequence length="186" mass="20829">MAKPAVFLDRDGVINVDHGYVHDEHDFQFIEGVFEATAALQRMGYLLVLVTNQSGIARGKFSEERFISLTQWMDWNFADNGVEFDGIYYCPHHAEHGIGQYKEECDCRKPKPGMFLSARDFLNIDMANSVMVGDKAEDMMAAEAAGVGTKILVRTGKPITEQGEALATVVLDSIRDVPHYLLRVKK</sequence>
<proteinExistence type="evidence at protein level"/>
<comment type="function">
    <text evidence="3">Converts the D-glycero-beta-D-manno-heptose 1,7-bisphosphate intermediate into D-glycero-beta-D-manno-heptose 1-phosphate by removing the phosphate group at the C-7 position in vitro. Also catalyzes the dephosphorylation of D-glycero-alpha-D-manno-heptose-1,7-bisphosphate in vitro.</text>
</comment>
<comment type="catalytic activity">
    <reaction evidence="3">
        <text>D-glycero-beta-D-manno-heptose 1,7-bisphosphate + H2O = D-glycero-beta-D-manno-heptose 1-phosphate + phosphate</text>
        <dbReference type="Rhea" id="RHEA:28518"/>
        <dbReference type="ChEBI" id="CHEBI:15377"/>
        <dbReference type="ChEBI" id="CHEBI:43474"/>
        <dbReference type="ChEBI" id="CHEBI:60208"/>
        <dbReference type="ChEBI" id="CHEBI:61593"/>
        <dbReference type="EC" id="3.1.3.82"/>
    </reaction>
</comment>
<comment type="cofactor">
    <cofactor evidence="3">
        <name>Mg(2+)</name>
        <dbReference type="ChEBI" id="CHEBI:18420"/>
    </cofactor>
</comment>
<comment type="cofactor">
    <cofactor evidence="1">
        <name>Zn(2+)</name>
        <dbReference type="ChEBI" id="CHEBI:29105"/>
    </cofactor>
</comment>
<comment type="pathway">
    <text>Nucleotide-sugar biosynthesis; ADP-L-glycero-beta-D-manno-heptose biosynthesis; ADP-L-glycero-beta-D-manno-heptose from D-glycero-beta-D-manno-heptose 7-phosphate: step 2/4.</text>
</comment>
<comment type="pathway">
    <text>Bacterial outer membrane biogenesis; LPS core biosynthesis.</text>
</comment>
<comment type="subunit">
    <text evidence="1">Monomer.</text>
</comment>
<comment type="subcellular location">
    <subcellularLocation>
        <location evidence="1">Cytoplasm</location>
    </subcellularLocation>
</comment>
<comment type="similarity">
    <text evidence="4">Belongs to the GmhB family.</text>
</comment>
<organism>
    <name type="scientific">Vibrio cholerae serotype O1 (strain ATCC 39315 / El Tor Inaba N16961)</name>
    <dbReference type="NCBI Taxonomy" id="243277"/>
    <lineage>
        <taxon>Bacteria</taxon>
        <taxon>Pseudomonadati</taxon>
        <taxon>Pseudomonadota</taxon>
        <taxon>Gammaproteobacteria</taxon>
        <taxon>Vibrionales</taxon>
        <taxon>Vibrionaceae</taxon>
        <taxon>Vibrio</taxon>
    </lineage>
</organism>
<protein>
    <recommendedName>
        <fullName>D-glycero-beta-D-manno-heptose-1,7-bisphosphate 7-phosphatase</fullName>
        <ecNumber evidence="3">3.1.3.82</ecNumber>
    </recommendedName>
    <alternativeName>
        <fullName>D,D-heptose 1,7-bisphosphate phosphatase</fullName>
        <shortName>HBP phosphatase</shortName>
    </alternativeName>
</protein>
<name>GMHBB_VIBCH</name>
<accession>Q9KTJ4</accession>